<sequence>MSSNISIVAIIPARYASTRFPGKPLIQINGKTMIQCVYDQVRSTPEITEVLVATDDDRIEAEVLRFGGKVVRTLPEHPSGTDRCFEAYQKLNKPFDFIINVQGDEPFIQPEQIRTLAGILTPDVELATLIKKIEDEETLFNPNTPKVLVNANGEAIYFSRQTIPYLRQHADKKDWLANHTFFKHIGMYAYRPDILAQITQLKPSALELAESLEQLRWLESGYSIHTAVTTIETVGIDTPEDLLRVTHTSS</sequence>
<organism>
    <name type="scientific">Cytophaga hutchinsonii (strain ATCC 33406 / DSM 1761 / CIP 103989 / NBRC 15051 / NCIMB 9469 / D465)</name>
    <dbReference type="NCBI Taxonomy" id="269798"/>
    <lineage>
        <taxon>Bacteria</taxon>
        <taxon>Pseudomonadati</taxon>
        <taxon>Bacteroidota</taxon>
        <taxon>Cytophagia</taxon>
        <taxon>Cytophagales</taxon>
        <taxon>Cytophagaceae</taxon>
        <taxon>Cytophaga</taxon>
    </lineage>
</organism>
<protein>
    <recommendedName>
        <fullName evidence="1">3-deoxy-manno-octulosonate cytidylyltransferase</fullName>
        <ecNumber evidence="1">2.7.7.38</ecNumber>
    </recommendedName>
    <alternativeName>
        <fullName evidence="1">CMP-2-keto-3-deoxyoctulosonic acid synthase</fullName>
        <shortName evidence="1">CKS</shortName>
        <shortName evidence="1">CMP-KDO synthase</shortName>
    </alternativeName>
</protein>
<keyword id="KW-0963">Cytoplasm</keyword>
<keyword id="KW-0448">Lipopolysaccharide biosynthesis</keyword>
<keyword id="KW-0548">Nucleotidyltransferase</keyword>
<keyword id="KW-1185">Reference proteome</keyword>
<keyword id="KW-0808">Transferase</keyword>
<evidence type="ECO:0000255" key="1">
    <source>
        <dbReference type="HAMAP-Rule" id="MF_00057"/>
    </source>
</evidence>
<dbReference type="EC" id="2.7.7.38" evidence="1"/>
<dbReference type="EMBL" id="CP000383">
    <property type="protein sequence ID" value="ABG60093.1"/>
    <property type="molecule type" value="Genomic_DNA"/>
</dbReference>
<dbReference type="RefSeq" id="WP_011586203.1">
    <property type="nucleotide sequence ID" value="NC_008255.1"/>
</dbReference>
<dbReference type="SMR" id="Q11R71"/>
<dbReference type="STRING" id="269798.CHU_2845"/>
<dbReference type="KEGG" id="chu:CHU_2845"/>
<dbReference type="eggNOG" id="COG1212">
    <property type="taxonomic scope" value="Bacteria"/>
</dbReference>
<dbReference type="HOGENOM" id="CLU_065038_0_1_10"/>
<dbReference type="OrthoDB" id="9815559at2"/>
<dbReference type="UniPathway" id="UPA00030"/>
<dbReference type="UniPathway" id="UPA00358">
    <property type="reaction ID" value="UER00476"/>
</dbReference>
<dbReference type="Proteomes" id="UP000001822">
    <property type="component" value="Chromosome"/>
</dbReference>
<dbReference type="GO" id="GO:0005829">
    <property type="term" value="C:cytosol"/>
    <property type="evidence" value="ECO:0007669"/>
    <property type="project" value="TreeGrafter"/>
</dbReference>
<dbReference type="GO" id="GO:0008690">
    <property type="term" value="F:3-deoxy-manno-octulosonate cytidylyltransferase activity"/>
    <property type="evidence" value="ECO:0007669"/>
    <property type="project" value="UniProtKB-UniRule"/>
</dbReference>
<dbReference type="GO" id="GO:0033468">
    <property type="term" value="P:CMP-keto-3-deoxy-D-manno-octulosonic acid biosynthetic process"/>
    <property type="evidence" value="ECO:0007669"/>
    <property type="project" value="UniProtKB-UniRule"/>
</dbReference>
<dbReference type="GO" id="GO:0009103">
    <property type="term" value="P:lipopolysaccharide biosynthetic process"/>
    <property type="evidence" value="ECO:0007669"/>
    <property type="project" value="UniProtKB-UniRule"/>
</dbReference>
<dbReference type="CDD" id="cd02517">
    <property type="entry name" value="CMP-KDO-Synthetase"/>
    <property type="match status" value="1"/>
</dbReference>
<dbReference type="FunFam" id="3.90.550.10:FF:000011">
    <property type="entry name" value="3-deoxy-manno-octulosonate cytidylyltransferase"/>
    <property type="match status" value="1"/>
</dbReference>
<dbReference type="Gene3D" id="3.90.550.10">
    <property type="entry name" value="Spore Coat Polysaccharide Biosynthesis Protein SpsA, Chain A"/>
    <property type="match status" value="1"/>
</dbReference>
<dbReference type="HAMAP" id="MF_00057">
    <property type="entry name" value="KdsB"/>
    <property type="match status" value="1"/>
</dbReference>
<dbReference type="InterPro" id="IPR003329">
    <property type="entry name" value="Cytidylyl_trans"/>
</dbReference>
<dbReference type="InterPro" id="IPR004528">
    <property type="entry name" value="KdsB"/>
</dbReference>
<dbReference type="InterPro" id="IPR029044">
    <property type="entry name" value="Nucleotide-diphossugar_trans"/>
</dbReference>
<dbReference type="NCBIfam" id="TIGR00466">
    <property type="entry name" value="kdsB"/>
    <property type="match status" value="1"/>
</dbReference>
<dbReference type="NCBIfam" id="NF003950">
    <property type="entry name" value="PRK05450.1-3"/>
    <property type="match status" value="1"/>
</dbReference>
<dbReference type="NCBIfam" id="NF003952">
    <property type="entry name" value="PRK05450.1-5"/>
    <property type="match status" value="1"/>
</dbReference>
<dbReference type="NCBIfam" id="NF009905">
    <property type="entry name" value="PRK13368.1"/>
    <property type="match status" value="1"/>
</dbReference>
<dbReference type="PANTHER" id="PTHR42866">
    <property type="entry name" value="3-DEOXY-MANNO-OCTULOSONATE CYTIDYLYLTRANSFERASE"/>
    <property type="match status" value="1"/>
</dbReference>
<dbReference type="PANTHER" id="PTHR42866:SF2">
    <property type="entry name" value="3-DEOXY-MANNO-OCTULOSONATE CYTIDYLYLTRANSFERASE, MITOCHONDRIAL"/>
    <property type="match status" value="1"/>
</dbReference>
<dbReference type="Pfam" id="PF02348">
    <property type="entry name" value="CTP_transf_3"/>
    <property type="match status" value="1"/>
</dbReference>
<dbReference type="SUPFAM" id="SSF53448">
    <property type="entry name" value="Nucleotide-diphospho-sugar transferases"/>
    <property type="match status" value="1"/>
</dbReference>
<reference key="1">
    <citation type="journal article" date="2007" name="Appl. Environ. Microbiol.">
        <title>Genome sequence of the cellulolytic gliding bacterium Cytophaga hutchinsonii.</title>
        <authorList>
            <person name="Xie G."/>
            <person name="Bruce D.C."/>
            <person name="Challacombe J.F."/>
            <person name="Chertkov O."/>
            <person name="Detter J.C."/>
            <person name="Gilna P."/>
            <person name="Han C.S."/>
            <person name="Lucas S."/>
            <person name="Misra M."/>
            <person name="Myers G.L."/>
            <person name="Richardson P."/>
            <person name="Tapia R."/>
            <person name="Thayer N."/>
            <person name="Thompson L.S."/>
            <person name="Brettin T.S."/>
            <person name="Henrissat B."/>
            <person name="Wilson D.B."/>
            <person name="McBride M.J."/>
        </authorList>
    </citation>
    <scope>NUCLEOTIDE SEQUENCE [LARGE SCALE GENOMIC DNA]</scope>
    <source>
        <strain>ATCC 33406 / DSM 1761 / JCM 20678 / CIP 103989 / IAM 12607 / NBRC 15051 / NCIMB 9469 / D465</strain>
    </source>
</reference>
<gene>
    <name evidence="1" type="primary">kdsB</name>
    <name type="ordered locus">CHU_2845</name>
</gene>
<name>KDSB_CYTH3</name>
<comment type="function">
    <text evidence="1">Activates KDO (a required 8-carbon sugar) for incorporation into bacterial lipopolysaccharide in Gram-negative bacteria.</text>
</comment>
<comment type="catalytic activity">
    <reaction evidence="1">
        <text>3-deoxy-alpha-D-manno-oct-2-ulosonate + CTP = CMP-3-deoxy-beta-D-manno-octulosonate + diphosphate</text>
        <dbReference type="Rhea" id="RHEA:23448"/>
        <dbReference type="ChEBI" id="CHEBI:33019"/>
        <dbReference type="ChEBI" id="CHEBI:37563"/>
        <dbReference type="ChEBI" id="CHEBI:85986"/>
        <dbReference type="ChEBI" id="CHEBI:85987"/>
        <dbReference type="EC" id="2.7.7.38"/>
    </reaction>
</comment>
<comment type="pathway">
    <text evidence="1">Nucleotide-sugar biosynthesis; CMP-3-deoxy-D-manno-octulosonate biosynthesis; CMP-3-deoxy-D-manno-octulosonate from 3-deoxy-D-manno-octulosonate and CTP: step 1/1.</text>
</comment>
<comment type="pathway">
    <text evidence="1">Bacterial outer membrane biogenesis; lipopolysaccharide biosynthesis.</text>
</comment>
<comment type="subcellular location">
    <subcellularLocation>
        <location evidence="1">Cytoplasm</location>
    </subcellularLocation>
</comment>
<comment type="similarity">
    <text evidence="1">Belongs to the KdsB family.</text>
</comment>
<feature type="chain" id="PRO_0000370056" description="3-deoxy-manno-octulosonate cytidylyltransferase">
    <location>
        <begin position="1"/>
        <end position="250"/>
    </location>
</feature>
<proteinExistence type="inferred from homology"/>
<accession>Q11R71</accession>